<accession>Q72C25</accession>
<organism>
    <name type="scientific">Nitratidesulfovibrio vulgaris (strain ATCC 29579 / DSM 644 / CCUG 34227 / NCIMB 8303 / VKM B-1760 / Hildenborough)</name>
    <name type="common">Desulfovibrio vulgaris</name>
    <dbReference type="NCBI Taxonomy" id="882"/>
    <lineage>
        <taxon>Bacteria</taxon>
        <taxon>Pseudomonadati</taxon>
        <taxon>Thermodesulfobacteriota</taxon>
        <taxon>Desulfovibrionia</taxon>
        <taxon>Desulfovibrionales</taxon>
        <taxon>Desulfovibrionaceae</taxon>
        <taxon>Nitratidesulfovibrio</taxon>
    </lineage>
</organism>
<gene>
    <name evidence="1" type="primary">tilS</name>
    <name type="ordered locus">DVU_1459</name>
</gene>
<proteinExistence type="inferred from homology"/>
<reference key="1">
    <citation type="journal article" date="2004" name="Nat. Biotechnol.">
        <title>The genome sequence of the anaerobic, sulfate-reducing bacterium Desulfovibrio vulgaris Hildenborough.</title>
        <authorList>
            <person name="Heidelberg J.F."/>
            <person name="Seshadri R."/>
            <person name="Haveman S.A."/>
            <person name="Hemme C.L."/>
            <person name="Paulsen I.T."/>
            <person name="Kolonay J.F."/>
            <person name="Eisen J.A."/>
            <person name="Ward N.L."/>
            <person name="Methe B.A."/>
            <person name="Brinkac L.M."/>
            <person name="Daugherty S.C."/>
            <person name="DeBoy R.T."/>
            <person name="Dodson R.J."/>
            <person name="Durkin A.S."/>
            <person name="Madupu R."/>
            <person name="Nelson W.C."/>
            <person name="Sullivan S.A."/>
            <person name="Fouts D.E."/>
            <person name="Haft D.H."/>
            <person name="Selengut J."/>
            <person name="Peterson J.D."/>
            <person name="Davidsen T.M."/>
            <person name="Zafar N."/>
            <person name="Zhou L."/>
            <person name="Radune D."/>
            <person name="Dimitrov G."/>
            <person name="Hance M."/>
            <person name="Tran K."/>
            <person name="Khouri H.M."/>
            <person name="Gill J."/>
            <person name="Utterback T.R."/>
            <person name="Feldblyum T.V."/>
            <person name="Wall J.D."/>
            <person name="Voordouw G."/>
            <person name="Fraser C.M."/>
        </authorList>
    </citation>
    <scope>NUCLEOTIDE SEQUENCE [LARGE SCALE GENOMIC DNA]</scope>
    <source>
        <strain>ATCC 29579 / DSM 644 / CCUG 34227 / NCIMB 8303 / VKM B-1760 / Hildenborough</strain>
    </source>
</reference>
<dbReference type="EC" id="6.3.4.19" evidence="1"/>
<dbReference type="EMBL" id="AE017285">
    <property type="protein sequence ID" value="AAS95937.1"/>
    <property type="status" value="ALT_INIT"/>
    <property type="molecule type" value="Genomic_DNA"/>
</dbReference>
<dbReference type="RefSeq" id="WP_010938752.1">
    <property type="nucleotide sequence ID" value="NZ_CABHLV010000001.1"/>
</dbReference>
<dbReference type="RefSeq" id="YP_010678.1">
    <property type="nucleotide sequence ID" value="NC_002937.3"/>
</dbReference>
<dbReference type="SMR" id="Q72C25"/>
<dbReference type="STRING" id="882.DVU_1459"/>
<dbReference type="PaxDb" id="882-DVU_1459"/>
<dbReference type="EnsemblBacteria" id="AAS95937">
    <property type="protein sequence ID" value="AAS95937"/>
    <property type="gene ID" value="DVU_1459"/>
</dbReference>
<dbReference type="KEGG" id="dvu:DVU_1459"/>
<dbReference type="PATRIC" id="fig|882.5.peg.1358"/>
<dbReference type="eggNOG" id="COG0037">
    <property type="taxonomic scope" value="Bacteria"/>
</dbReference>
<dbReference type="HOGENOM" id="CLU_018869_0_0_7"/>
<dbReference type="OrthoDB" id="9807403at2"/>
<dbReference type="PhylomeDB" id="Q72C25"/>
<dbReference type="Proteomes" id="UP000002194">
    <property type="component" value="Chromosome"/>
</dbReference>
<dbReference type="GO" id="GO:0005737">
    <property type="term" value="C:cytoplasm"/>
    <property type="evidence" value="ECO:0007669"/>
    <property type="project" value="UniProtKB-SubCell"/>
</dbReference>
<dbReference type="GO" id="GO:0005524">
    <property type="term" value="F:ATP binding"/>
    <property type="evidence" value="ECO:0007669"/>
    <property type="project" value="UniProtKB-UniRule"/>
</dbReference>
<dbReference type="GO" id="GO:0032267">
    <property type="term" value="F:tRNA(Ile)-lysidine synthase activity"/>
    <property type="evidence" value="ECO:0007669"/>
    <property type="project" value="UniProtKB-EC"/>
</dbReference>
<dbReference type="GO" id="GO:0006400">
    <property type="term" value="P:tRNA modification"/>
    <property type="evidence" value="ECO:0007669"/>
    <property type="project" value="UniProtKB-UniRule"/>
</dbReference>
<dbReference type="CDD" id="cd01992">
    <property type="entry name" value="TilS_N"/>
    <property type="match status" value="1"/>
</dbReference>
<dbReference type="Gene3D" id="3.40.50.620">
    <property type="entry name" value="HUPs"/>
    <property type="match status" value="1"/>
</dbReference>
<dbReference type="HAMAP" id="MF_01161">
    <property type="entry name" value="tRNA_Ile_lys_synt"/>
    <property type="match status" value="1"/>
</dbReference>
<dbReference type="InterPro" id="IPR014729">
    <property type="entry name" value="Rossmann-like_a/b/a_fold"/>
</dbReference>
<dbReference type="InterPro" id="IPR011063">
    <property type="entry name" value="TilS/TtcA_N"/>
</dbReference>
<dbReference type="InterPro" id="IPR012094">
    <property type="entry name" value="tRNA_Ile_lys_synt"/>
</dbReference>
<dbReference type="InterPro" id="IPR012795">
    <property type="entry name" value="tRNA_Ile_lys_synt_N"/>
</dbReference>
<dbReference type="NCBIfam" id="TIGR02432">
    <property type="entry name" value="lysidine_TilS_N"/>
    <property type="match status" value="1"/>
</dbReference>
<dbReference type="PANTHER" id="PTHR43033">
    <property type="entry name" value="TRNA(ILE)-LYSIDINE SYNTHASE-RELATED"/>
    <property type="match status" value="1"/>
</dbReference>
<dbReference type="PANTHER" id="PTHR43033:SF1">
    <property type="entry name" value="TRNA(ILE)-LYSIDINE SYNTHASE-RELATED"/>
    <property type="match status" value="1"/>
</dbReference>
<dbReference type="Pfam" id="PF01171">
    <property type="entry name" value="ATP_bind_3"/>
    <property type="match status" value="1"/>
</dbReference>
<dbReference type="SUPFAM" id="SSF52402">
    <property type="entry name" value="Adenine nucleotide alpha hydrolases-like"/>
    <property type="match status" value="1"/>
</dbReference>
<sequence length="347" mass="37410">MERTIKGVCDGENGEGVRNCHCVVALSGGADSTALLLILHYLRQRLGLSLSALHVDHGLRPESAAEARAAVTFCHALGIPLAVHTLTVDELAAVWRVGTEEAGRKARYDLLAAALPSPAADWICTGHHLGDLAEDVLMRLVRGCGWPALGGMRLCDPARRILRPLLLTEKDRLEAFLATLGVSWTEDPSNASDTYLRNRMRHGVIPLLTAENPGFLDQVRDLWQLAHIDADFWETRTAATLSAAPASPSHVEGEASAPHDAAHGAESIRLPKTTLTGLHQAERLRLFKEVLRRMGEGQARAETLLALDAAWVAGRGGTRFMFAGCKTATVRRGDIIFSGGPPAEDTP</sequence>
<name>TILS_NITV2</name>
<comment type="function">
    <text evidence="1">Ligates lysine onto the cytidine present at position 34 of the AUA codon-specific tRNA(Ile) that contains the anticodon CAU, in an ATP-dependent manner. Cytidine is converted to lysidine, thus changing the amino acid specificity of the tRNA from methionine to isoleucine.</text>
</comment>
<comment type="catalytic activity">
    <reaction evidence="1">
        <text>cytidine(34) in tRNA(Ile2) + L-lysine + ATP = lysidine(34) in tRNA(Ile2) + AMP + diphosphate + H(+)</text>
        <dbReference type="Rhea" id="RHEA:43744"/>
        <dbReference type="Rhea" id="RHEA-COMP:10625"/>
        <dbReference type="Rhea" id="RHEA-COMP:10670"/>
        <dbReference type="ChEBI" id="CHEBI:15378"/>
        <dbReference type="ChEBI" id="CHEBI:30616"/>
        <dbReference type="ChEBI" id="CHEBI:32551"/>
        <dbReference type="ChEBI" id="CHEBI:33019"/>
        <dbReference type="ChEBI" id="CHEBI:82748"/>
        <dbReference type="ChEBI" id="CHEBI:83665"/>
        <dbReference type="ChEBI" id="CHEBI:456215"/>
        <dbReference type="EC" id="6.3.4.19"/>
    </reaction>
</comment>
<comment type="subcellular location">
    <subcellularLocation>
        <location evidence="1">Cytoplasm</location>
    </subcellularLocation>
</comment>
<comment type="domain">
    <text>The N-terminal region contains the highly conserved SGGXDS motif, predicted to be a P-loop motif involved in ATP binding.</text>
</comment>
<comment type="similarity">
    <text evidence="1">Belongs to the tRNA(Ile)-lysidine synthase family.</text>
</comment>
<comment type="sequence caution" evidence="3">
    <conflict type="erroneous initiation">
        <sequence resource="EMBL-CDS" id="AAS95937"/>
    </conflict>
</comment>
<evidence type="ECO:0000255" key="1">
    <source>
        <dbReference type="HAMAP-Rule" id="MF_01161"/>
    </source>
</evidence>
<evidence type="ECO:0000256" key="2">
    <source>
        <dbReference type="SAM" id="MobiDB-lite"/>
    </source>
</evidence>
<evidence type="ECO:0000305" key="3"/>
<keyword id="KW-0067">ATP-binding</keyword>
<keyword id="KW-0963">Cytoplasm</keyword>
<keyword id="KW-0436">Ligase</keyword>
<keyword id="KW-0547">Nucleotide-binding</keyword>
<keyword id="KW-1185">Reference proteome</keyword>
<keyword id="KW-0819">tRNA processing</keyword>
<feature type="chain" id="PRO_0000181688" description="tRNA(Ile)-lysidine synthase">
    <location>
        <begin position="1"/>
        <end position="347"/>
    </location>
</feature>
<feature type="region of interest" description="Disordered" evidence="2">
    <location>
        <begin position="243"/>
        <end position="263"/>
    </location>
</feature>
<feature type="binding site" evidence="1">
    <location>
        <begin position="27"/>
        <end position="32"/>
    </location>
    <ligand>
        <name>ATP</name>
        <dbReference type="ChEBI" id="CHEBI:30616"/>
    </ligand>
</feature>
<protein>
    <recommendedName>
        <fullName evidence="1">tRNA(Ile)-lysidine synthase</fullName>
        <ecNumber evidence="1">6.3.4.19</ecNumber>
    </recommendedName>
    <alternativeName>
        <fullName evidence="1">tRNA(Ile)-2-lysyl-cytidine synthase</fullName>
    </alternativeName>
    <alternativeName>
        <fullName evidence="1">tRNA(Ile)-lysidine synthetase</fullName>
    </alternativeName>
</protein>